<sequence>MSRVVVIDHPLIQHKLSIIRDKDTGPKEFRELVNEIAMLMAYEVTRDLPTEEVEVDTPIARARCRRLAGEKLGLIPILRAGLGMVQGILSLYPTARVGHIGLYRDPDTLKPVEYYCKLPTDLGERELLVLDPMLATGGSVVASLDLIKRQGGRRIKLLCLIAAPEGVQAVQEAHPDVDIYLAALDEMLNEHAYIVPGLGDAGDRLFGTK</sequence>
<feature type="chain" id="PRO_0000120901" description="Uracil phosphoribosyltransferase">
    <location>
        <begin position="1"/>
        <end position="209"/>
    </location>
</feature>
<feature type="binding site" evidence="1">
    <location>
        <position position="79"/>
    </location>
    <ligand>
        <name>5-phospho-alpha-D-ribose 1-diphosphate</name>
        <dbReference type="ChEBI" id="CHEBI:58017"/>
    </ligand>
</feature>
<feature type="binding site" evidence="1">
    <location>
        <position position="104"/>
    </location>
    <ligand>
        <name>5-phospho-alpha-D-ribose 1-diphosphate</name>
        <dbReference type="ChEBI" id="CHEBI:58017"/>
    </ligand>
</feature>
<feature type="binding site" evidence="1">
    <location>
        <begin position="131"/>
        <end position="139"/>
    </location>
    <ligand>
        <name>5-phospho-alpha-D-ribose 1-diphosphate</name>
        <dbReference type="ChEBI" id="CHEBI:58017"/>
    </ligand>
</feature>
<feature type="binding site" evidence="1">
    <location>
        <position position="194"/>
    </location>
    <ligand>
        <name>uracil</name>
        <dbReference type="ChEBI" id="CHEBI:17568"/>
    </ligand>
</feature>
<feature type="binding site" evidence="1">
    <location>
        <begin position="199"/>
        <end position="201"/>
    </location>
    <ligand>
        <name>uracil</name>
        <dbReference type="ChEBI" id="CHEBI:17568"/>
    </ligand>
</feature>
<feature type="binding site" evidence="1">
    <location>
        <position position="200"/>
    </location>
    <ligand>
        <name>5-phospho-alpha-D-ribose 1-diphosphate</name>
        <dbReference type="ChEBI" id="CHEBI:58017"/>
    </ligand>
</feature>
<proteinExistence type="inferred from homology"/>
<reference key="1">
    <citation type="journal article" date="2004" name="Nucleic Acids Res.">
        <title>Genome sequence of Symbiobacterium thermophilum, an uncultivable bacterium that depends on microbial commensalism.</title>
        <authorList>
            <person name="Ueda K."/>
            <person name="Yamashita A."/>
            <person name="Ishikawa J."/>
            <person name="Shimada M."/>
            <person name="Watsuji T."/>
            <person name="Morimura K."/>
            <person name="Ikeda H."/>
            <person name="Hattori M."/>
            <person name="Beppu T."/>
        </authorList>
    </citation>
    <scope>NUCLEOTIDE SEQUENCE [LARGE SCALE GENOMIC DNA]</scope>
    <source>
        <strain>DSM 24528 / JCM 14929 / IAM 14863 / T</strain>
    </source>
</reference>
<accession>Q67TC9</accession>
<gene>
    <name evidence="1" type="primary">upp</name>
    <name type="ordered locus">STH79</name>
</gene>
<organism>
    <name type="scientific">Symbiobacterium thermophilum (strain DSM 24528 / JCM 14929 / IAM 14863 / T)</name>
    <dbReference type="NCBI Taxonomy" id="292459"/>
    <lineage>
        <taxon>Bacteria</taxon>
        <taxon>Bacillati</taxon>
        <taxon>Bacillota</taxon>
        <taxon>Clostridia</taxon>
        <taxon>Eubacteriales</taxon>
        <taxon>Symbiobacteriaceae</taxon>
        <taxon>Symbiobacterium</taxon>
    </lineage>
</organism>
<evidence type="ECO:0000255" key="1">
    <source>
        <dbReference type="HAMAP-Rule" id="MF_01218"/>
    </source>
</evidence>
<comment type="function">
    <text evidence="1">Catalyzes the conversion of uracil and 5-phospho-alpha-D-ribose 1-diphosphate (PRPP) to UMP and diphosphate.</text>
</comment>
<comment type="catalytic activity">
    <reaction evidence="1">
        <text>UMP + diphosphate = 5-phospho-alpha-D-ribose 1-diphosphate + uracil</text>
        <dbReference type="Rhea" id="RHEA:13017"/>
        <dbReference type="ChEBI" id="CHEBI:17568"/>
        <dbReference type="ChEBI" id="CHEBI:33019"/>
        <dbReference type="ChEBI" id="CHEBI:57865"/>
        <dbReference type="ChEBI" id="CHEBI:58017"/>
        <dbReference type="EC" id="2.4.2.9"/>
    </reaction>
</comment>
<comment type="cofactor">
    <cofactor evidence="1">
        <name>Mg(2+)</name>
        <dbReference type="ChEBI" id="CHEBI:18420"/>
    </cofactor>
    <text evidence="1">Binds 1 Mg(2+) ion per subunit. The magnesium is bound as Mg-PRPP.</text>
</comment>
<comment type="activity regulation">
    <text evidence="1">Allosterically activated by GTP.</text>
</comment>
<comment type="pathway">
    <text evidence="1">Pyrimidine metabolism; UMP biosynthesis via salvage pathway; UMP from uracil: step 1/1.</text>
</comment>
<comment type="similarity">
    <text evidence="1">Belongs to the UPRTase family.</text>
</comment>
<name>UPP_SYMTH</name>
<protein>
    <recommendedName>
        <fullName evidence="1">Uracil phosphoribosyltransferase</fullName>
        <ecNumber evidence="1">2.4.2.9</ecNumber>
    </recommendedName>
    <alternativeName>
        <fullName evidence="1">UMP pyrophosphorylase</fullName>
    </alternativeName>
    <alternativeName>
        <fullName evidence="1">UPRTase</fullName>
    </alternativeName>
</protein>
<dbReference type="EC" id="2.4.2.9" evidence="1"/>
<dbReference type="EMBL" id="AP006840">
    <property type="protein sequence ID" value="BAD39064.1"/>
    <property type="molecule type" value="Genomic_DNA"/>
</dbReference>
<dbReference type="RefSeq" id="WP_011194214.1">
    <property type="nucleotide sequence ID" value="NC_006177.1"/>
</dbReference>
<dbReference type="SMR" id="Q67TC9"/>
<dbReference type="STRING" id="292459.STH79"/>
<dbReference type="KEGG" id="sth:STH79"/>
<dbReference type="eggNOG" id="COG0035">
    <property type="taxonomic scope" value="Bacteria"/>
</dbReference>
<dbReference type="HOGENOM" id="CLU_067096_2_2_9"/>
<dbReference type="OrthoDB" id="9781675at2"/>
<dbReference type="UniPathway" id="UPA00574">
    <property type="reaction ID" value="UER00636"/>
</dbReference>
<dbReference type="Proteomes" id="UP000000417">
    <property type="component" value="Chromosome"/>
</dbReference>
<dbReference type="GO" id="GO:0005525">
    <property type="term" value="F:GTP binding"/>
    <property type="evidence" value="ECO:0007669"/>
    <property type="project" value="UniProtKB-KW"/>
</dbReference>
<dbReference type="GO" id="GO:0000287">
    <property type="term" value="F:magnesium ion binding"/>
    <property type="evidence" value="ECO:0007669"/>
    <property type="project" value="UniProtKB-UniRule"/>
</dbReference>
<dbReference type="GO" id="GO:0004845">
    <property type="term" value="F:uracil phosphoribosyltransferase activity"/>
    <property type="evidence" value="ECO:0007669"/>
    <property type="project" value="UniProtKB-UniRule"/>
</dbReference>
<dbReference type="GO" id="GO:0044206">
    <property type="term" value="P:UMP salvage"/>
    <property type="evidence" value="ECO:0007669"/>
    <property type="project" value="UniProtKB-UniRule"/>
</dbReference>
<dbReference type="GO" id="GO:0006223">
    <property type="term" value="P:uracil salvage"/>
    <property type="evidence" value="ECO:0007669"/>
    <property type="project" value="InterPro"/>
</dbReference>
<dbReference type="CDD" id="cd06223">
    <property type="entry name" value="PRTases_typeI"/>
    <property type="match status" value="1"/>
</dbReference>
<dbReference type="FunFam" id="3.40.50.2020:FF:000003">
    <property type="entry name" value="Uracil phosphoribosyltransferase"/>
    <property type="match status" value="1"/>
</dbReference>
<dbReference type="Gene3D" id="3.40.50.2020">
    <property type="match status" value="1"/>
</dbReference>
<dbReference type="HAMAP" id="MF_01218_B">
    <property type="entry name" value="Upp_B"/>
    <property type="match status" value="1"/>
</dbReference>
<dbReference type="InterPro" id="IPR000836">
    <property type="entry name" value="PRibTrfase_dom"/>
</dbReference>
<dbReference type="InterPro" id="IPR029057">
    <property type="entry name" value="PRTase-like"/>
</dbReference>
<dbReference type="InterPro" id="IPR034332">
    <property type="entry name" value="Upp_B"/>
</dbReference>
<dbReference type="InterPro" id="IPR050054">
    <property type="entry name" value="UPRTase/APRTase"/>
</dbReference>
<dbReference type="InterPro" id="IPR005765">
    <property type="entry name" value="Ura_phspho_trans"/>
</dbReference>
<dbReference type="NCBIfam" id="NF001097">
    <property type="entry name" value="PRK00129.1"/>
    <property type="match status" value="1"/>
</dbReference>
<dbReference type="NCBIfam" id="TIGR01091">
    <property type="entry name" value="upp"/>
    <property type="match status" value="1"/>
</dbReference>
<dbReference type="PANTHER" id="PTHR32315">
    <property type="entry name" value="ADENINE PHOSPHORIBOSYLTRANSFERASE"/>
    <property type="match status" value="1"/>
</dbReference>
<dbReference type="PANTHER" id="PTHR32315:SF4">
    <property type="entry name" value="URACIL PHOSPHORIBOSYLTRANSFERASE, CHLOROPLASTIC"/>
    <property type="match status" value="1"/>
</dbReference>
<dbReference type="Pfam" id="PF14681">
    <property type="entry name" value="UPRTase"/>
    <property type="match status" value="1"/>
</dbReference>
<dbReference type="SUPFAM" id="SSF53271">
    <property type="entry name" value="PRTase-like"/>
    <property type="match status" value="1"/>
</dbReference>
<keyword id="KW-0021">Allosteric enzyme</keyword>
<keyword id="KW-0328">Glycosyltransferase</keyword>
<keyword id="KW-0342">GTP-binding</keyword>
<keyword id="KW-0460">Magnesium</keyword>
<keyword id="KW-0547">Nucleotide-binding</keyword>
<keyword id="KW-1185">Reference proteome</keyword>
<keyword id="KW-0808">Transferase</keyword>